<dbReference type="EMBL" id="AE003852">
    <property type="protein sequence ID" value="AAF94067.1"/>
    <property type="status" value="ALT_INIT"/>
    <property type="molecule type" value="Genomic_DNA"/>
</dbReference>
<dbReference type="PIR" id="A82266">
    <property type="entry name" value="A82266"/>
</dbReference>
<dbReference type="RefSeq" id="NP_230552.2">
    <property type="nucleotide sequence ID" value="NC_002505.1"/>
</dbReference>
<dbReference type="RefSeq" id="WP_000672706.1">
    <property type="nucleotide sequence ID" value="NZ_LT906614.1"/>
</dbReference>
<dbReference type="SMR" id="Q9KTJ7"/>
<dbReference type="STRING" id="243277.VC_0905"/>
<dbReference type="DNASU" id="2614196"/>
<dbReference type="EnsemblBacteria" id="AAF94067">
    <property type="protein sequence ID" value="AAF94067"/>
    <property type="gene ID" value="VC_0905"/>
</dbReference>
<dbReference type="GeneID" id="69720388"/>
<dbReference type="KEGG" id="vch:VC_0905"/>
<dbReference type="PATRIC" id="fig|243277.26.peg.862"/>
<dbReference type="eggNOG" id="COG1464">
    <property type="taxonomic scope" value="Bacteria"/>
</dbReference>
<dbReference type="HOGENOM" id="CLU_067080_3_0_6"/>
<dbReference type="Proteomes" id="UP000000584">
    <property type="component" value="Chromosome 1"/>
</dbReference>
<dbReference type="GO" id="GO:0005886">
    <property type="term" value="C:plasma membrane"/>
    <property type="evidence" value="ECO:0000318"/>
    <property type="project" value="GO_Central"/>
</dbReference>
<dbReference type="GO" id="GO:0048473">
    <property type="term" value="P:D-methionine transmembrane transport"/>
    <property type="evidence" value="ECO:0000318"/>
    <property type="project" value="GO_Central"/>
</dbReference>
<dbReference type="GO" id="GO:1903692">
    <property type="term" value="P:methionine import across plasma membrane"/>
    <property type="evidence" value="ECO:0000318"/>
    <property type="project" value="GO_Central"/>
</dbReference>
<dbReference type="CDD" id="cd13598">
    <property type="entry name" value="PBP2_lipoprotein_IlpA_like"/>
    <property type="match status" value="1"/>
</dbReference>
<dbReference type="FunFam" id="3.40.190.10:FF:000016">
    <property type="entry name" value="Lipoprotein"/>
    <property type="match status" value="1"/>
</dbReference>
<dbReference type="Gene3D" id="3.40.190.10">
    <property type="entry name" value="Periplasmic binding protein-like II"/>
    <property type="match status" value="2"/>
</dbReference>
<dbReference type="InterPro" id="IPR004872">
    <property type="entry name" value="Lipoprotein_NlpA"/>
</dbReference>
<dbReference type="NCBIfam" id="TIGR00363">
    <property type="entry name" value="MetQ/NlpA family lipoprotein"/>
    <property type="match status" value="1"/>
</dbReference>
<dbReference type="NCBIfam" id="NF008285">
    <property type="entry name" value="PRK11063.1"/>
    <property type="match status" value="1"/>
</dbReference>
<dbReference type="PANTHER" id="PTHR30429">
    <property type="entry name" value="D-METHIONINE-BINDING LIPOPROTEIN METQ"/>
    <property type="match status" value="1"/>
</dbReference>
<dbReference type="PANTHER" id="PTHR30429:SF1">
    <property type="entry name" value="D-METHIONINE-BINDING LIPOPROTEIN METQ-RELATED"/>
    <property type="match status" value="1"/>
</dbReference>
<dbReference type="Pfam" id="PF03180">
    <property type="entry name" value="Lipoprotein_9"/>
    <property type="match status" value="1"/>
</dbReference>
<dbReference type="PIRSF" id="PIRSF002854">
    <property type="entry name" value="MetQ"/>
    <property type="match status" value="1"/>
</dbReference>
<dbReference type="SUPFAM" id="SSF53850">
    <property type="entry name" value="Periplasmic binding protein-like II"/>
    <property type="match status" value="1"/>
</dbReference>
<dbReference type="PROSITE" id="PS51257">
    <property type="entry name" value="PROKAR_LIPOPROTEIN"/>
    <property type="match status" value="1"/>
</dbReference>
<comment type="function">
    <text evidence="1">This protein is a component of a D-methionine permease, a binding protein-dependent, ATP-driven transport system.</text>
</comment>
<comment type="subcellular location">
    <subcellularLocation>
        <location evidence="3">Cell membrane</location>
        <topology evidence="3">Lipid-anchor</topology>
    </subcellularLocation>
</comment>
<comment type="similarity">
    <text evidence="3">Belongs to the NlpA lipoprotein family.</text>
</comment>
<comment type="sequence caution" evidence="3">
    <conflict type="erroneous initiation">
        <sequence resource="EMBL-CDS" id="AAF94067"/>
    </conflict>
</comment>
<reference key="1">
    <citation type="journal article" date="2000" name="Nature">
        <title>DNA sequence of both chromosomes of the cholera pathogen Vibrio cholerae.</title>
        <authorList>
            <person name="Heidelberg J.F."/>
            <person name="Eisen J.A."/>
            <person name="Nelson W.C."/>
            <person name="Clayton R.A."/>
            <person name="Gwinn M.L."/>
            <person name="Dodson R.J."/>
            <person name="Haft D.H."/>
            <person name="Hickey E.K."/>
            <person name="Peterson J.D."/>
            <person name="Umayam L.A."/>
            <person name="Gill S.R."/>
            <person name="Nelson K.E."/>
            <person name="Read T.D."/>
            <person name="Tettelin H."/>
            <person name="Richardson D.L."/>
            <person name="Ermolaeva M.D."/>
            <person name="Vamathevan J.J."/>
            <person name="Bass S."/>
            <person name="Qin H."/>
            <person name="Dragoi I."/>
            <person name="Sellers P."/>
            <person name="McDonald L.A."/>
            <person name="Utterback T.R."/>
            <person name="Fleischmann R.D."/>
            <person name="Nierman W.C."/>
            <person name="White O."/>
            <person name="Salzberg S.L."/>
            <person name="Smith H.O."/>
            <person name="Colwell R.R."/>
            <person name="Mekalanos J.J."/>
            <person name="Venter J.C."/>
            <person name="Fraser C.M."/>
        </authorList>
    </citation>
    <scope>NUCLEOTIDE SEQUENCE [LARGE SCALE GENOMIC DNA]</scope>
    <source>
        <strain>ATCC 39315 / El Tor Inaba N16961</strain>
    </source>
</reference>
<sequence>MKFSLKSLLTIAAAASTLILAGCGEKAVDNNKVKIGVMAGAEAQVAEVAAKVAKEKYNLDVELVTFTDYVTPNAALDDGSIDANAFQHKPYLDKQIADRGYKLAIVGNTFVYPIAGYSKQIKSVDELQDGARIAVPNDPTNLGRSLLLLQQQGLLKLREDVGLLATVRDIVENPKKLEILELDAAQLPRSLDDVALSIINTTYASSINLTPEKDGIFVENKESPYVNILVAREANVNAENVQNFKKAYQTDEVAKAASEIFQGGAVKGW</sequence>
<organism>
    <name type="scientific">Vibrio cholerae serotype O1 (strain ATCC 39315 / El Tor Inaba N16961)</name>
    <dbReference type="NCBI Taxonomy" id="243277"/>
    <lineage>
        <taxon>Bacteria</taxon>
        <taxon>Pseudomonadati</taxon>
        <taxon>Pseudomonadota</taxon>
        <taxon>Gammaproteobacteria</taxon>
        <taxon>Vibrionales</taxon>
        <taxon>Vibrionaceae</taxon>
        <taxon>Vibrio</taxon>
    </lineage>
</organism>
<proteinExistence type="inferred from homology"/>
<keyword id="KW-0029">Amino-acid transport</keyword>
<keyword id="KW-1003">Cell membrane</keyword>
<keyword id="KW-0449">Lipoprotein</keyword>
<keyword id="KW-0472">Membrane</keyword>
<keyword id="KW-0564">Palmitate</keyword>
<keyword id="KW-1185">Reference proteome</keyword>
<keyword id="KW-0732">Signal</keyword>
<keyword id="KW-0813">Transport</keyword>
<name>METQ_VIBCH</name>
<gene>
    <name type="primary">metQ</name>
    <name type="ordered locus">VC_0905</name>
</gene>
<protein>
    <recommendedName>
        <fullName>Probable D-methionine-binding lipoprotein MetQ</fullName>
    </recommendedName>
</protein>
<feature type="signal peptide" evidence="2">
    <location>
        <begin position="1"/>
        <end position="22"/>
    </location>
</feature>
<feature type="chain" id="PRO_0000019744" description="Probable D-methionine-binding lipoprotein MetQ">
    <location>
        <begin position="23"/>
        <end position="269"/>
    </location>
</feature>
<feature type="lipid moiety-binding region" description="N-palmitoyl cysteine" evidence="2">
    <location>
        <position position="23"/>
    </location>
</feature>
<feature type="lipid moiety-binding region" description="S-diacylglycerol cysteine" evidence="2">
    <location>
        <position position="23"/>
    </location>
</feature>
<accession>Q9KTJ7</accession>
<evidence type="ECO:0000250" key="1"/>
<evidence type="ECO:0000255" key="2">
    <source>
        <dbReference type="PROSITE-ProRule" id="PRU00303"/>
    </source>
</evidence>
<evidence type="ECO:0000305" key="3"/>